<proteinExistence type="evidence at protein level"/>
<reference evidence="10" key="1">
    <citation type="submission" date="1996-10" db="EMBL/GenBank/DDBJ databases">
        <title>Complete DNA sequence encoding the alpha and beta subunits of the tungsten and selenocysteine containing formate dehydrogenase of Clostridium thermoaceticum.</title>
        <authorList>
            <person name="Li X.-L."/>
            <person name="Ljungdahl L.G."/>
            <person name="Gollin D.J."/>
        </authorList>
    </citation>
    <scope>NUCLEOTIDE SEQUENCE [GENOMIC DNA]</scope>
</reference>
<reference key="2">
    <citation type="journal article" date="1973" name="J. Bacteriol.">
        <title>Formate dehydrogenase of Clostridium thermoaceticum: incorporation of selenium-75, and the effects of selenite, molybdate, and tungstate on the enzyme.</title>
        <authorList>
            <person name="Andreesen J.R."/>
            <person name="Ljungdahl L.G."/>
        </authorList>
    </citation>
    <scope>FUNCTION</scope>
    <scope>CATALYTIC ACTIVITY</scope>
    <scope>ACTIVITY REGULATION</scope>
</reference>
<reference key="3">
    <citation type="journal article" date="1974" name="J. Bacteriol.">
        <title>Nicotinamide adenine dinucleotide phosphate-dependent formate dehydrogenase from Clostridium thermoaceticum: purification and properties.</title>
        <authorList>
            <person name="Andreesen J.R."/>
            <person name="Ljungdahl L.G."/>
        </authorList>
    </citation>
    <scope>FUNCTION</scope>
    <scope>CATALYTIC ACTIVITY</scope>
    <scope>ACTIVITY REGULATION</scope>
    <scope>BIOPHYSICOCHEMICAL PROPERTIES</scope>
</reference>
<reference key="4">
    <citation type="journal article" date="1975" name="FEBS Lett.">
        <title>Tungsten, a component of active formate dehydrogenase from Clostridium thermoacetium.</title>
        <authorList>
            <person name="Ljungdahl L.G."/>
            <person name="Andreesen J.R."/>
        </authorList>
    </citation>
    <scope>FUNCTION</scope>
    <scope>CATALYTIC ACTIVITY</scope>
    <scope>ACTIVITY REGULATION</scope>
</reference>
<reference key="5">
    <citation type="journal article" date="1983" name="Biochem. Biophys. Res. Commun.">
        <title>Characterization and spectroscopic properties of reduced Mo and W formate dehydrogenase from C. thermoaceticum.</title>
        <authorList>
            <person name="Durfor C.N."/>
            <person name="Wetherbee P.J."/>
            <person name="Deaton J.C."/>
            <person name="Solomon E.I."/>
        </authorList>
    </citation>
    <scope>CATALYTIC ACTIVITY</scope>
    <scope>ACTIVITY REGULATION</scope>
    <source>
        <strain>ATCC 39073 / JCM 9320</strain>
    </source>
</reference>
<reference key="6">
    <citation type="journal article" date="1983" name="J. Biol. Chem.">
        <title>Purification and properties of NADP-dependent formate dehydrogenase from Clostridium thermoaceticum, a tungsten-selenium-iron protein.</title>
        <authorList>
            <person name="Yamamoto I."/>
            <person name="Saiki T."/>
            <person name="Liu S.M."/>
            <person name="Ljungdahl L.G."/>
        </authorList>
    </citation>
    <scope>FUNCTION</scope>
    <scope>CATALYTIC ACTIVITY</scope>
    <scope>ACTIVITY REGULATION</scope>
    <scope>BIOPHYSICOCHEMICAL PROPERTIES</scope>
    <scope>SUBUNIT</scope>
    <source>
        <strain>ATCC 39073 / JCM 9320</strain>
    </source>
</reference>
<organism>
    <name type="scientific">Moorella thermoacetica</name>
    <name type="common">Clostridium thermoaceticum</name>
    <dbReference type="NCBI Taxonomy" id="1525"/>
    <lineage>
        <taxon>Bacteria</taxon>
        <taxon>Bacillati</taxon>
        <taxon>Bacillota</taxon>
        <taxon>Clostridia</taxon>
        <taxon>Moorellales</taxon>
        <taxon>Moorellaceae</taxon>
        <taxon>Moorella</taxon>
    </lineage>
</organism>
<keyword id="KW-0963">Cytoplasm</keyword>
<keyword id="KW-0521">NADP</keyword>
<keyword id="KW-0560">Oxidoreductase</keyword>
<dbReference type="EC" id="1.17.1.10" evidence="1 2 3 4 5"/>
<dbReference type="EMBL" id="U73807">
    <property type="protein sequence ID" value="AAB18329.1"/>
    <property type="molecule type" value="Genomic_DNA"/>
</dbReference>
<dbReference type="SMR" id="P77907"/>
<dbReference type="KEGG" id="mtho:MOTHE_c23890"/>
<dbReference type="KEGG" id="mthz:MOTHA_c24610"/>
<dbReference type="PATRIC" id="fig|1525.11.peg.1287"/>
<dbReference type="OMA" id="AEAHIVY"/>
<dbReference type="BioCyc" id="MetaCyc:MONOMER-4214"/>
<dbReference type="GO" id="GO:0005737">
    <property type="term" value="C:cytoplasm"/>
    <property type="evidence" value="ECO:0007669"/>
    <property type="project" value="UniProtKB-SubCell"/>
</dbReference>
<dbReference type="GO" id="GO:0051539">
    <property type="term" value="F:4 iron, 4 sulfur cluster binding"/>
    <property type="evidence" value="ECO:0007669"/>
    <property type="project" value="InterPro"/>
</dbReference>
<dbReference type="GO" id="GO:0010181">
    <property type="term" value="F:FMN binding"/>
    <property type="evidence" value="ECO:0007669"/>
    <property type="project" value="InterPro"/>
</dbReference>
<dbReference type="GO" id="GO:0004355">
    <property type="term" value="F:glutamate synthase (NADPH) activity"/>
    <property type="evidence" value="ECO:0007669"/>
    <property type="project" value="UniProtKB-EC"/>
</dbReference>
<dbReference type="GO" id="GO:0008137">
    <property type="term" value="F:NADH dehydrogenase (ubiquinone) activity"/>
    <property type="evidence" value="ECO:0007669"/>
    <property type="project" value="InterPro"/>
</dbReference>
<dbReference type="Gene3D" id="1.10.1060.10">
    <property type="entry name" value="Alpha-helical ferredoxin"/>
    <property type="match status" value="1"/>
</dbReference>
<dbReference type="Gene3D" id="3.50.50.60">
    <property type="entry name" value="FAD/NAD(P)-binding domain"/>
    <property type="match status" value="2"/>
</dbReference>
<dbReference type="Gene3D" id="3.40.50.720">
    <property type="entry name" value="NAD(P)-binding Rossmann-like Domain"/>
    <property type="match status" value="1"/>
</dbReference>
<dbReference type="Gene3D" id="1.20.1440.230">
    <property type="entry name" value="NADH-ubiquinone oxidoreductase 51kDa subunit, iron-sulphur binding domain"/>
    <property type="match status" value="1"/>
</dbReference>
<dbReference type="InterPro" id="IPR028261">
    <property type="entry name" value="DPD_II"/>
</dbReference>
<dbReference type="InterPro" id="IPR036188">
    <property type="entry name" value="FAD/NAD-bd_sf"/>
</dbReference>
<dbReference type="InterPro" id="IPR023753">
    <property type="entry name" value="FAD/NAD-binding_dom"/>
</dbReference>
<dbReference type="InterPro" id="IPR009051">
    <property type="entry name" value="Helical_ferredxn"/>
</dbReference>
<dbReference type="InterPro" id="IPR001949">
    <property type="entry name" value="NADH-UbQ_OxRdtase_51kDa_CS"/>
</dbReference>
<dbReference type="InterPro" id="IPR019575">
    <property type="entry name" value="Nuop51_4Fe4S-bd"/>
</dbReference>
<dbReference type="InterPro" id="IPR037207">
    <property type="entry name" value="Nuop51_4Fe4S-bd_sf"/>
</dbReference>
<dbReference type="PANTHER" id="PTHR42783">
    <property type="entry name" value="GLUTAMATE SYNTHASE [NADPH] SMALL CHAIN"/>
    <property type="match status" value="1"/>
</dbReference>
<dbReference type="PANTHER" id="PTHR42783:SF3">
    <property type="entry name" value="GLUTAMATE SYNTHASE [NADPH] SMALL CHAIN-RELATED"/>
    <property type="match status" value="1"/>
</dbReference>
<dbReference type="Pfam" id="PF14691">
    <property type="entry name" value="Fer4_20"/>
    <property type="match status" value="1"/>
</dbReference>
<dbReference type="Pfam" id="PF10589">
    <property type="entry name" value="NADH_4Fe-4S"/>
    <property type="match status" value="1"/>
</dbReference>
<dbReference type="Pfam" id="PF07992">
    <property type="entry name" value="Pyr_redox_2"/>
    <property type="match status" value="1"/>
</dbReference>
<dbReference type="PRINTS" id="PR00419">
    <property type="entry name" value="ADXRDTASE"/>
</dbReference>
<dbReference type="SMART" id="SM00928">
    <property type="entry name" value="NADH_4Fe-4S"/>
    <property type="match status" value="1"/>
</dbReference>
<dbReference type="SUPFAM" id="SSF46548">
    <property type="entry name" value="alpha-helical ferredoxin"/>
    <property type="match status" value="2"/>
</dbReference>
<dbReference type="SUPFAM" id="SSF140490">
    <property type="entry name" value="Nqo1C-terminal domain-like"/>
    <property type="match status" value="1"/>
</dbReference>
<dbReference type="SUPFAM" id="SSF51971">
    <property type="entry name" value="Nucleotide-binding domain"/>
    <property type="match status" value="2"/>
</dbReference>
<name>FDHB_MOOTH</name>
<feature type="chain" id="PRO_0000461423" description="NADP(+)-dependent formate dehydrogenase subunit beta">
    <location>
        <begin position="1"/>
        <end position="707"/>
    </location>
</feature>
<accession>P77907</accession>
<sequence length="707" mass="75058">MGEVVFSTWGGKVVDHRGGPSGGGPSWAGEFGGRQLKAFIGWDGLVVTDPAVDLLAALQAYYQAVQGESCGRCVPCRVGTRVIYNVLVRIAGGEGLPSDLDLLRRVAWIVRDGSLCELGQAGAKAVLDFLDYYSEALRPFLEDSGRVAGGQRRPGPGGRVQVLASGRVLVGNDRGKGAAAASPAAGLTYKPFVTAPCLKRCPAHLDIPAYIDAIKDGRYEESLAIIRQRTALAGVLGRVCVHPCEENCRRGNVDEPLAIRGLKRFVADYEVKRGRRPVAVCGGNLFTGPWRPAGQAGGEETTAVTSGKKVAIIGAGPAGLSAAYQLAGRGYKVTIFEALPVAGGMLAVGIPSYRLPRDILAGEIEAIKALGVTINLNTRVGVDVTMDQLQRDYDAVFIATGLHASSRMGVAGEDEGYGGFIPGVKFLRDLNLDRCPSLEGKVVAVVGGGNVAMDCARSALRRGAREVHLIYRRSRAEMPAHATEVRDAEAEGVIYHFLVNPTALVAEKGNIKGMQCVRMKLGEPDDSGRRRPVPVPGTEFFLPCDIVVPAIGQAADLSFLDGRIEVGKRGTISVDPVTLATSVPGVFAGGDIVLGARTVVEAVAQGNRAAVSIDQYLRQGTTSPTVEDELDAWLEKVGVYDPEEDVGIYGGRPRQAERVAPLAERVKDFREVEGGFDFYAGRAEAERCLRCYRVGMMVLAGEGESNG</sequence>
<evidence type="ECO:0000269" key="1">
    <source>
    </source>
</evidence>
<evidence type="ECO:0000269" key="2">
    <source>
    </source>
</evidence>
<evidence type="ECO:0000269" key="3">
    <source>
    </source>
</evidence>
<evidence type="ECO:0000269" key="4">
    <source>
    </source>
</evidence>
<evidence type="ECO:0000269" key="5">
    <source>
    </source>
</evidence>
<evidence type="ECO:0000305" key="6"/>
<evidence type="ECO:0000305" key="7">
    <source>
    </source>
</evidence>
<evidence type="ECO:0000305" key="8">
    <source>
    </source>
</evidence>
<evidence type="ECO:0000305" key="9">
    <source>
    </source>
</evidence>
<evidence type="ECO:0000312" key="10">
    <source>
        <dbReference type="EMBL" id="AAB18329.1"/>
    </source>
</evidence>
<protein>
    <recommendedName>
        <fullName evidence="6">NADP(+)-dependent formate dehydrogenase subunit beta</fullName>
        <ecNumber evidence="1 2 3 4 5">1.17.1.10</ecNumber>
    </recommendedName>
</protein>
<gene>
    <name evidence="10" type="primary">fdhB</name>
</gene>
<comment type="function">
    <text evidence="1 2 3 5">Component of a dehydrogenase that catalyzes the NADP-dependent reduction of CO(2) to formate, the first step in the synthesis of the methyl group of acetate during synthesis of acetate from CO(2) (PubMed:1132514, PubMed:4147651, PubMed:4154039, PubMed:6822536). In vitro, can use methyl viologen and benzyl viologen in addition to its natural electron acceptor (PubMed:4154039).</text>
</comment>
<comment type="catalytic activity">
    <reaction evidence="1 2 3 4 5">
        <text>formate + NADP(+) = CO2 + NADPH</text>
        <dbReference type="Rhea" id="RHEA:12000"/>
        <dbReference type="ChEBI" id="CHEBI:15740"/>
        <dbReference type="ChEBI" id="CHEBI:16526"/>
        <dbReference type="ChEBI" id="CHEBI:57783"/>
        <dbReference type="ChEBI" id="CHEBI:58349"/>
        <dbReference type="EC" id="1.17.1.10"/>
    </reaction>
    <physiologicalReaction direction="right-to-left" evidence="7 9">
        <dbReference type="Rhea" id="RHEA:12002"/>
    </physiologicalReaction>
</comment>
<comment type="activity regulation">
    <text evidence="1 2 3 4 5">Activity is very sensitive to oxygen (PubMed:1132514, PubMed:4147651, PubMed:4154039, PubMed:6822536). The activity in growing cells is enhanced when selenite and molybdate are added together to the growth medium (PubMed:4147651). Tungstate replaces and is better than molybdate (PubMed:1132514, PubMed:4147651, PubMed:6311213). Selenite is incorporated into the enzyme (PubMed:4147651, PubMed:6822536). Requires a sulfhydryl compound for activity (PubMed:4154039). Inhibited by cyanide, EDTA, hypophosphite and mercaptoethanol (PubMed:4154039). Sulfite inhibits the activity with NADP but not with methyl viologen as electron acceptor (PubMed:4154039).</text>
</comment>
<comment type="biophysicochemical properties">
    <kinetics>
        <KM evidence="3">0.227 mM for formate (at 55 degrees Celsius and pH 7.5, with NADP as electron acceptor)</KM>
        <KM evidence="3">0.083 mM for formate (at 55 degrees Celsius and pH 7.5, with methyl viologen as electron acceptor)</KM>
        <KM evidence="5">0.109 mM for formate (at 55 degrees Celsius and pH 7.5)</KM>
        <KM evidence="3">0.109 mM for NADP(+) (at 55 degrees Celsius and pH 7.5)</KM>
        <KM evidence="5">0.117 mM for NADP(+) (at 55 degrees Celsius and pH 7.5)</KM>
        <KM evidence="3">2.35 mM for methyl viologen (at 55 degrees Celsius and pH 7.5)</KM>
    </kinetics>
    <phDependence>
        <text evidence="3">Optimum pH is 7-9.5 (with NADP as electron acceptor).</text>
    </phDependence>
    <temperatureDependence>
        <text evidence="3">Optimum temperature is 85 degrees Celsius (PubMed:4154039). In the absence of substrates, the enzyme is stable at 70 degrees Celsius but is rapidly inactivated at temperatures above 73 degrees Celsius (PubMed:4154039).</text>
    </temperatureDependence>
</comment>
<comment type="subunit">
    <text evidence="5">Heterotetramer composed of two alpha (FdhA) and two beta (FdhB) subunits.</text>
</comment>
<comment type="subcellular location">
    <subcellularLocation>
        <location evidence="8">Cytoplasm</location>
    </subcellularLocation>
</comment>